<keyword id="KW-0007">Acetylation</keyword>
<keyword id="KW-0113">Calvin cycle</keyword>
<keyword id="KW-0120">Carbon dioxide fixation</keyword>
<keyword id="KW-0150">Chloroplast</keyword>
<keyword id="KW-1015">Disulfide bond</keyword>
<keyword id="KW-0456">Lyase</keyword>
<keyword id="KW-0460">Magnesium</keyword>
<keyword id="KW-0479">Metal-binding</keyword>
<keyword id="KW-0488">Methylation</keyword>
<keyword id="KW-0503">Monooxygenase</keyword>
<keyword id="KW-0560">Oxidoreductase</keyword>
<keyword id="KW-0601">Photorespiration</keyword>
<keyword id="KW-0602">Photosynthesis</keyword>
<keyword id="KW-0934">Plastid</keyword>
<dbReference type="EC" id="4.1.1.39" evidence="1"/>
<dbReference type="EMBL" id="X63663">
    <property type="protein sequence ID" value="CAA45203.1"/>
    <property type="molecule type" value="Genomic_DNA"/>
</dbReference>
<dbReference type="PIR" id="S19217">
    <property type="entry name" value="RKKHLW"/>
</dbReference>
<dbReference type="RefSeq" id="YP_009522184.1">
    <property type="nucleotide sequence ID" value="NC_039583.1"/>
</dbReference>
<dbReference type="SMR" id="P69570"/>
<dbReference type="GeneID" id="38283946"/>
<dbReference type="GO" id="GO:0009507">
    <property type="term" value="C:chloroplast"/>
    <property type="evidence" value="ECO:0007669"/>
    <property type="project" value="UniProtKB-SubCell"/>
</dbReference>
<dbReference type="GO" id="GO:0000287">
    <property type="term" value="F:magnesium ion binding"/>
    <property type="evidence" value="ECO:0007669"/>
    <property type="project" value="UniProtKB-UniRule"/>
</dbReference>
<dbReference type="GO" id="GO:0004497">
    <property type="term" value="F:monooxygenase activity"/>
    <property type="evidence" value="ECO:0007669"/>
    <property type="project" value="UniProtKB-KW"/>
</dbReference>
<dbReference type="GO" id="GO:0016984">
    <property type="term" value="F:ribulose-bisphosphate carboxylase activity"/>
    <property type="evidence" value="ECO:0007669"/>
    <property type="project" value="UniProtKB-UniRule"/>
</dbReference>
<dbReference type="GO" id="GO:0009853">
    <property type="term" value="P:photorespiration"/>
    <property type="evidence" value="ECO:0007669"/>
    <property type="project" value="UniProtKB-KW"/>
</dbReference>
<dbReference type="GO" id="GO:0019253">
    <property type="term" value="P:reductive pentose-phosphate cycle"/>
    <property type="evidence" value="ECO:0007669"/>
    <property type="project" value="UniProtKB-UniRule"/>
</dbReference>
<dbReference type="CDD" id="cd08212">
    <property type="entry name" value="RuBisCO_large_I"/>
    <property type="match status" value="1"/>
</dbReference>
<dbReference type="FunFam" id="3.20.20.110:FF:000001">
    <property type="entry name" value="Ribulose bisphosphate carboxylase large chain"/>
    <property type="match status" value="1"/>
</dbReference>
<dbReference type="FunFam" id="3.30.70.150:FF:000001">
    <property type="entry name" value="Ribulose bisphosphate carboxylase large chain"/>
    <property type="match status" value="1"/>
</dbReference>
<dbReference type="Gene3D" id="3.20.20.110">
    <property type="entry name" value="Ribulose bisphosphate carboxylase, large subunit, C-terminal domain"/>
    <property type="match status" value="1"/>
</dbReference>
<dbReference type="Gene3D" id="3.30.70.150">
    <property type="entry name" value="RuBisCO large subunit, N-terminal domain"/>
    <property type="match status" value="1"/>
</dbReference>
<dbReference type="HAMAP" id="MF_01338">
    <property type="entry name" value="RuBisCO_L_type1"/>
    <property type="match status" value="1"/>
</dbReference>
<dbReference type="InterPro" id="IPR033966">
    <property type="entry name" value="RuBisCO"/>
</dbReference>
<dbReference type="InterPro" id="IPR020878">
    <property type="entry name" value="RuBisCo_large_chain_AS"/>
</dbReference>
<dbReference type="InterPro" id="IPR000685">
    <property type="entry name" value="RuBisCO_lsu_C"/>
</dbReference>
<dbReference type="InterPro" id="IPR036376">
    <property type="entry name" value="RuBisCO_lsu_C_sf"/>
</dbReference>
<dbReference type="InterPro" id="IPR017443">
    <property type="entry name" value="RuBisCO_lsu_fd_N"/>
</dbReference>
<dbReference type="InterPro" id="IPR036422">
    <property type="entry name" value="RuBisCO_lsu_N_sf"/>
</dbReference>
<dbReference type="InterPro" id="IPR020888">
    <property type="entry name" value="RuBisCO_lsuI"/>
</dbReference>
<dbReference type="NCBIfam" id="NF003252">
    <property type="entry name" value="PRK04208.1"/>
    <property type="match status" value="1"/>
</dbReference>
<dbReference type="PANTHER" id="PTHR42704">
    <property type="entry name" value="RIBULOSE BISPHOSPHATE CARBOXYLASE"/>
    <property type="match status" value="1"/>
</dbReference>
<dbReference type="PANTHER" id="PTHR42704:SF17">
    <property type="entry name" value="RIBULOSE BISPHOSPHATE CARBOXYLASE LARGE CHAIN"/>
    <property type="match status" value="1"/>
</dbReference>
<dbReference type="Pfam" id="PF00016">
    <property type="entry name" value="RuBisCO_large"/>
    <property type="match status" value="1"/>
</dbReference>
<dbReference type="Pfam" id="PF02788">
    <property type="entry name" value="RuBisCO_large_N"/>
    <property type="match status" value="1"/>
</dbReference>
<dbReference type="SFLD" id="SFLDG01052">
    <property type="entry name" value="RuBisCO"/>
    <property type="match status" value="1"/>
</dbReference>
<dbReference type="SFLD" id="SFLDS00014">
    <property type="entry name" value="RuBisCO"/>
    <property type="match status" value="1"/>
</dbReference>
<dbReference type="SFLD" id="SFLDG00301">
    <property type="entry name" value="RuBisCO-like_proteins"/>
    <property type="match status" value="1"/>
</dbReference>
<dbReference type="SUPFAM" id="SSF51649">
    <property type="entry name" value="RuBisCo, C-terminal domain"/>
    <property type="match status" value="1"/>
</dbReference>
<dbReference type="SUPFAM" id="SSF54966">
    <property type="entry name" value="RuBisCO, large subunit, small (N-terminal) domain"/>
    <property type="match status" value="1"/>
</dbReference>
<dbReference type="PROSITE" id="PS00157">
    <property type="entry name" value="RUBISCO_LARGE"/>
    <property type="match status" value="1"/>
</dbReference>
<sequence>MSPKTETKASVGFKAGVKDYRLTYYTPEYQTKDTDILAAFRVTPQPGVPPEEAGAAVAAESSTGTWTTVWTDGLTSLDRYKGRCYDIEAVPGEESQFIAYVAYPLDLFEEGSVTNLFTSIVGNVFGFKALRALRLEDLRIPPAYSKTFQGPPHGIQVERDKLNKYGRPLLGCTIKPKLGLSAKNYGRAVYECLRGGLDFTKDDENVNSQPFMRWRDRFVFCAEALYKAQAETGEIKGHYLNATAGTCEEMMKRAVFARELGVPIVMHDYLTGGFTANTSLAHYCRDNGLLLHIHRAMHAVIDRQRNHGMHFRVLAKALRMSGGDHIHAGTVVGKLEGERDVTLGFVDLLRDDFIEKDRSRGIYFTQDWVSMPGVLPVASGGIHVWHMPALTEIFGDDSVLQFGGGTLGHPWGNAPGAVANRVALEACVQARNEGRDLAREGNEVIREATKWSPELAAACEVWKEIKFEFDTIDYL</sequence>
<accession>P69570</accession>
<accession>P17249</accession>
<protein>
    <recommendedName>
        <fullName evidence="1">Ribulose bisphosphate carboxylase large chain</fullName>
        <shortName evidence="1">RuBisCO large subunit</shortName>
        <ecNumber evidence="1">4.1.1.39</ecNumber>
    </recommendedName>
</protein>
<feature type="propeptide" id="PRO_0000031273" evidence="1">
    <location>
        <begin position="1"/>
        <end position="2"/>
    </location>
</feature>
<feature type="chain" id="PRO_0000031274" description="Ribulose bisphosphate carboxylase large chain">
    <location>
        <begin position="3"/>
        <end position="475"/>
    </location>
</feature>
<feature type="active site" description="Proton acceptor" evidence="1">
    <location>
        <position position="175"/>
    </location>
</feature>
<feature type="active site" description="Proton acceptor" evidence="1">
    <location>
        <position position="294"/>
    </location>
</feature>
<feature type="binding site" description="in homodimeric partner" evidence="1">
    <location>
        <position position="123"/>
    </location>
    <ligand>
        <name>substrate</name>
    </ligand>
</feature>
<feature type="binding site" evidence="1">
    <location>
        <position position="173"/>
    </location>
    <ligand>
        <name>substrate</name>
    </ligand>
</feature>
<feature type="binding site" evidence="1">
    <location>
        <position position="177"/>
    </location>
    <ligand>
        <name>substrate</name>
    </ligand>
</feature>
<feature type="binding site" description="via carbamate group" evidence="1">
    <location>
        <position position="201"/>
    </location>
    <ligand>
        <name>Mg(2+)</name>
        <dbReference type="ChEBI" id="CHEBI:18420"/>
    </ligand>
</feature>
<feature type="binding site" evidence="1">
    <location>
        <position position="203"/>
    </location>
    <ligand>
        <name>Mg(2+)</name>
        <dbReference type="ChEBI" id="CHEBI:18420"/>
    </ligand>
</feature>
<feature type="binding site" evidence="1">
    <location>
        <position position="204"/>
    </location>
    <ligand>
        <name>Mg(2+)</name>
        <dbReference type="ChEBI" id="CHEBI:18420"/>
    </ligand>
</feature>
<feature type="binding site" evidence="1">
    <location>
        <position position="295"/>
    </location>
    <ligand>
        <name>substrate</name>
    </ligand>
</feature>
<feature type="binding site" evidence="1">
    <location>
        <position position="327"/>
    </location>
    <ligand>
        <name>substrate</name>
    </ligand>
</feature>
<feature type="binding site" evidence="1">
    <location>
        <position position="379"/>
    </location>
    <ligand>
        <name>substrate</name>
    </ligand>
</feature>
<feature type="site" description="Transition state stabilizer" evidence="1">
    <location>
        <position position="334"/>
    </location>
</feature>
<feature type="modified residue" description="N-acetylproline" evidence="1">
    <location>
        <position position="3"/>
    </location>
</feature>
<feature type="modified residue" description="N6,N6,N6-trimethyllysine" evidence="1">
    <location>
        <position position="14"/>
    </location>
</feature>
<feature type="modified residue" description="N6-carboxylysine" evidence="1">
    <location>
        <position position="201"/>
    </location>
</feature>
<feature type="disulfide bond" description="Interchain; in linked form" evidence="1">
    <location>
        <position position="247"/>
    </location>
</feature>
<comment type="function">
    <text evidence="1">RuBisCO catalyzes two reactions: the carboxylation of D-ribulose 1,5-bisphosphate, the primary event in carbon dioxide fixation, as well as the oxidative fragmentation of the pentose substrate in the photorespiration process. Both reactions occur simultaneously and in competition at the same active site.</text>
</comment>
<comment type="catalytic activity">
    <reaction evidence="1">
        <text>2 (2R)-3-phosphoglycerate + 2 H(+) = D-ribulose 1,5-bisphosphate + CO2 + H2O</text>
        <dbReference type="Rhea" id="RHEA:23124"/>
        <dbReference type="ChEBI" id="CHEBI:15377"/>
        <dbReference type="ChEBI" id="CHEBI:15378"/>
        <dbReference type="ChEBI" id="CHEBI:16526"/>
        <dbReference type="ChEBI" id="CHEBI:57870"/>
        <dbReference type="ChEBI" id="CHEBI:58272"/>
        <dbReference type="EC" id="4.1.1.39"/>
    </reaction>
</comment>
<comment type="catalytic activity">
    <reaction evidence="1">
        <text>D-ribulose 1,5-bisphosphate + O2 = 2-phosphoglycolate + (2R)-3-phosphoglycerate + 2 H(+)</text>
        <dbReference type="Rhea" id="RHEA:36631"/>
        <dbReference type="ChEBI" id="CHEBI:15378"/>
        <dbReference type="ChEBI" id="CHEBI:15379"/>
        <dbReference type="ChEBI" id="CHEBI:57870"/>
        <dbReference type="ChEBI" id="CHEBI:58033"/>
        <dbReference type="ChEBI" id="CHEBI:58272"/>
    </reaction>
</comment>
<comment type="cofactor">
    <cofactor evidence="1">
        <name>Mg(2+)</name>
        <dbReference type="ChEBI" id="CHEBI:18420"/>
    </cofactor>
    <text evidence="1">Binds 1 Mg(2+) ion per subunit.</text>
</comment>
<comment type="subunit">
    <text evidence="1">Heterohexadecamer of 8 large chains and 8 small chains; disulfide-linked. The disulfide link is formed within the large subunit homodimers.</text>
</comment>
<comment type="subcellular location">
    <subcellularLocation>
        <location>Plastid</location>
        <location>Chloroplast</location>
    </subcellularLocation>
</comment>
<comment type="PTM">
    <text evidence="1">The disulfide bond which can form in the large chain dimeric partners within the hexadecamer appears to be associated with oxidative stress and protein turnover.</text>
</comment>
<comment type="miscellaneous">
    <text evidence="1">The basic functional RuBisCO is composed of a large chain homodimer in a 'head-to-tail' conformation. In form I RuBisCO this homodimer is arranged in a barrel-like tetramer with the small subunits forming a tetrameric 'cap' on each end of the 'barrel'.</text>
</comment>
<comment type="similarity">
    <text evidence="1">Belongs to the RuBisCO large chain family. Type I subfamily.</text>
</comment>
<proteinExistence type="inferred from homology"/>
<name>RBL_LAROX</name>
<reference key="1">
    <citation type="submission" date="1992-01" db="EMBL/GenBank/DDBJ databases">
        <authorList>
            <person name="Doerksen A.H."/>
            <person name="Strauss S."/>
            <person name="Price R."/>
        </authorList>
    </citation>
    <scope>NUCLEOTIDE SEQUENCE [GENOMIC DNA]</scope>
</reference>
<organism>
    <name type="scientific">Larix occidentalis</name>
    <name type="common">Western larch</name>
    <dbReference type="NCBI Taxonomy" id="3327"/>
    <lineage>
        <taxon>Eukaryota</taxon>
        <taxon>Viridiplantae</taxon>
        <taxon>Streptophyta</taxon>
        <taxon>Embryophyta</taxon>
        <taxon>Tracheophyta</taxon>
        <taxon>Spermatophyta</taxon>
        <taxon>Pinopsida</taxon>
        <taxon>Pinidae</taxon>
        <taxon>Conifers I</taxon>
        <taxon>Pinales</taxon>
        <taxon>Pinaceae</taxon>
        <taxon>Larix</taxon>
    </lineage>
</organism>
<geneLocation type="chloroplast"/>
<gene>
    <name evidence="1" type="primary">rbcL</name>
</gene>
<evidence type="ECO:0000255" key="1">
    <source>
        <dbReference type="HAMAP-Rule" id="MF_01338"/>
    </source>
</evidence>